<sequence length="356" mass="41442">MNKKILISTGGSGGHVIPATIIYKHLEDNFDVSMTSDFRGVKFLNKDEYNLKIFNVRPISKNLLIIPLDFIFMIFLIFKSISFFRKNKIDTLISTGGYMSLPLCLGARILNIKLLLFEPNMVLGRSNKFFLSYCQKIFCYSNNIKKFPIKFKNKIKVIPALLRKNFYNKRDYNKSLDTINLLIIGGSQGAKIFDDLVKNAIIELAKNYKLKIYQQTNSINFESFKKIYEDKNIQCELFNFNDDVVNFMQKTDLCITRAGASTLAELNFTETPYLAIPLPTAKDNHQFENAHFYNKLGFNWLLNQKEIDEKTLLNKLINIIDNKEEYLVKKKNMKDFNYENTWNNINLKIISVINEN</sequence>
<reference key="1">
    <citation type="journal article" date="2005" name="Science">
        <title>Genome streamlining in a cosmopolitan oceanic bacterium.</title>
        <authorList>
            <person name="Giovannoni S.J."/>
            <person name="Tripp H.J."/>
            <person name="Givan S."/>
            <person name="Podar M."/>
            <person name="Vergin K.L."/>
            <person name="Baptista D."/>
            <person name="Bibbs L."/>
            <person name="Eads J."/>
            <person name="Richardson T.H."/>
            <person name="Noordewier M."/>
            <person name="Rappe M.S."/>
            <person name="Short J.M."/>
            <person name="Carrington J.C."/>
            <person name="Mathur E.J."/>
        </authorList>
    </citation>
    <scope>NUCLEOTIDE SEQUENCE [LARGE SCALE GENOMIC DNA]</scope>
    <source>
        <strain>HTCC1062</strain>
    </source>
</reference>
<comment type="function">
    <text evidence="1">Cell wall formation. Catalyzes the transfer of a GlcNAc subunit on undecaprenyl-pyrophosphoryl-MurNAc-pentapeptide (lipid intermediate I) to form undecaprenyl-pyrophosphoryl-MurNAc-(pentapeptide)GlcNAc (lipid intermediate II).</text>
</comment>
<comment type="catalytic activity">
    <reaction evidence="1">
        <text>di-trans,octa-cis-undecaprenyl diphospho-N-acetyl-alpha-D-muramoyl-L-alanyl-D-glutamyl-meso-2,6-diaminopimeloyl-D-alanyl-D-alanine + UDP-N-acetyl-alpha-D-glucosamine = di-trans,octa-cis-undecaprenyl diphospho-[N-acetyl-alpha-D-glucosaminyl-(1-&gt;4)]-N-acetyl-alpha-D-muramoyl-L-alanyl-D-glutamyl-meso-2,6-diaminopimeloyl-D-alanyl-D-alanine + UDP + H(+)</text>
        <dbReference type="Rhea" id="RHEA:31227"/>
        <dbReference type="ChEBI" id="CHEBI:15378"/>
        <dbReference type="ChEBI" id="CHEBI:57705"/>
        <dbReference type="ChEBI" id="CHEBI:58223"/>
        <dbReference type="ChEBI" id="CHEBI:61387"/>
        <dbReference type="ChEBI" id="CHEBI:61388"/>
        <dbReference type="EC" id="2.4.1.227"/>
    </reaction>
</comment>
<comment type="pathway">
    <text evidence="1">Cell wall biogenesis; peptidoglycan biosynthesis.</text>
</comment>
<comment type="subcellular location">
    <subcellularLocation>
        <location evidence="1">Cell inner membrane</location>
        <topology evidence="1">Peripheral membrane protein</topology>
        <orientation evidence="1">Cytoplasmic side</orientation>
    </subcellularLocation>
</comment>
<comment type="similarity">
    <text evidence="1">Belongs to the glycosyltransferase 28 family. MurG subfamily.</text>
</comment>
<evidence type="ECO:0000255" key="1">
    <source>
        <dbReference type="HAMAP-Rule" id="MF_00033"/>
    </source>
</evidence>
<dbReference type="EC" id="2.4.1.227" evidence="1"/>
<dbReference type="EMBL" id="CP000084">
    <property type="protein sequence ID" value="AAZ20849.1"/>
    <property type="molecule type" value="Genomic_DNA"/>
</dbReference>
<dbReference type="RefSeq" id="WP_011281419.1">
    <property type="nucleotide sequence ID" value="NC_007205.1"/>
</dbReference>
<dbReference type="SMR" id="Q4FPK5"/>
<dbReference type="STRING" id="335992.SAR11_0024"/>
<dbReference type="CAZy" id="GT28">
    <property type="family name" value="Glycosyltransferase Family 28"/>
</dbReference>
<dbReference type="GeneID" id="66294527"/>
<dbReference type="KEGG" id="pub:SAR11_0024"/>
<dbReference type="eggNOG" id="COG0707">
    <property type="taxonomic scope" value="Bacteria"/>
</dbReference>
<dbReference type="HOGENOM" id="CLU_037404_2_1_5"/>
<dbReference type="OrthoDB" id="9808936at2"/>
<dbReference type="UniPathway" id="UPA00219"/>
<dbReference type="Proteomes" id="UP000002528">
    <property type="component" value="Chromosome"/>
</dbReference>
<dbReference type="GO" id="GO:0005886">
    <property type="term" value="C:plasma membrane"/>
    <property type="evidence" value="ECO:0007669"/>
    <property type="project" value="UniProtKB-SubCell"/>
</dbReference>
<dbReference type="GO" id="GO:0051991">
    <property type="term" value="F:UDP-N-acetyl-D-glucosamine:N-acetylmuramoyl-L-alanyl-D-glutamyl-meso-2,6-diaminopimelyl-D-alanyl-D-alanine-diphosphoundecaprenol 4-beta-N-acetylglucosaminlytransferase activity"/>
    <property type="evidence" value="ECO:0007669"/>
    <property type="project" value="RHEA"/>
</dbReference>
<dbReference type="GO" id="GO:0050511">
    <property type="term" value="F:undecaprenyldiphospho-muramoylpentapeptide beta-N-acetylglucosaminyltransferase activity"/>
    <property type="evidence" value="ECO:0007669"/>
    <property type="project" value="UniProtKB-UniRule"/>
</dbReference>
<dbReference type="GO" id="GO:0005975">
    <property type="term" value="P:carbohydrate metabolic process"/>
    <property type="evidence" value="ECO:0007669"/>
    <property type="project" value="InterPro"/>
</dbReference>
<dbReference type="GO" id="GO:0051301">
    <property type="term" value="P:cell division"/>
    <property type="evidence" value="ECO:0007669"/>
    <property type="project" value="UniProtKB-KW"/>
</dbReference>
<dbReference type="GO" id="GO:0071555">
    <property type="term" value="P:cell wall organization"/>
    <property type="evidence" value="ECO:0007669"/>
    <property type="project" value="UniProtKB-KW"/>
</dbReference>
<dbReference type="GO" id="GO:0030259">
    <property type="term" value="P:lipid glycosylation"/>
    <property type="evidence" value="ECO:0007669"/>
    <property type="project" value="UniProtKB-UniRule"/>
</dbReference>
<dbReference type="GO" id="GO:0009252">
    <property type="term" value="P:peptidoglycan biosynthetic process"/>
    <property type="evidence" value="ECO:0007669"/>
    <property type="project" value="UniProtKB-UniRule"/>
</dbReference>
<dbReference type="GO" id="GO:0008360">
    <property type="term" value="P:regulation of cell shape"/>
    <property type="evidence" value="ECO:0007669"/>
    <property type="project" value="UniProtKB-KW"/>
</dbReference>
<dbReference type="CDD" id="cd03785">
    <property type="entry name" value="GT28_MurG"/>
    <property type="match status" value="1"/>
</dbReference>
<dbReference type="Gene3D" id="3.40.50.2000">
    <property type="entry name" value="Glycogen Phosphorylase B"/>
    <property type="match status" value="2"/>
</dbReference>
<dbReference type="HAMAP" id="MF_00033">
    <property type="entry name" value="MurG"/>
    <property type="match status" value="1"/>
</dbReference>
<dbReference type="InterPro" id="IPR006009">
    <property type="entry name" value="GlcNAc_MurG"/>
</dbReference>
<dbReference type="InterPro" id="IPR007235">
    <property type="entry name" value="Glyco_trans_28_C"/>
</dbReference>
<dbReference type="InterPro" id="IPR004276">
    <property type="entry name" value="GlycoTrans_28_N"/>
</dbReference>
<dbReference type="PANTHER" id="PTHR21015:SF22">
    <property type="entry name" value="GLYCOSYLTRANSFERASE"/>
    <property type="match status" value="1"/>
</dbReference>
<dbReference type="PANTHER" id="PTHR21015">
    <property type="entry name" value="UDP-N-ACETYLGLUCOSAMINE--N-ACETYLMURAMYL-(PENTAPEPTIDE) PYROPHOSPHORYL-UNDECAPRENOL N-ACETYLGLUCOSAMINE TRANSFERASE 1"/>
    <property type="match status" value="1"/>
</dbReference>
<dbReference type="Pfam" id="PF04101">
    <property type="entry name" value="Glyco_tran_28_C"/>
    <property type="match status" value="1"/>
</dbReference>
<dbReference type="Pfam" id="PF03033">
    <property type="entry name" value="Glyco_transf_28"/>
    <property type="match status" value="1"/>
</dbReference>
<dbReference type="SUPFAM" id="SSF53756">
    <property type="entry name" value="UDP-Glycosyltransferase/glycogen phosphorylase"/>
    <property type="match status" value="1"/>
</dbReference>
<proteinExistence type="inferred from homology"/>
<organism>
    <name type="scientific">Pelagibacter ubique (strain HTCC1062)</name>
    <dbReference type="NCBI Taxonomy" id="335992"/>
    <lineage>
        <taxon>Bacteria</taxon>
        <taxon>Pseudomonadati</taxon>
        <taxon>Pseudomonadota</taxon>
        <taxon>Alphaproteobacteria</taxon>
        <taxon>Candidatus Pelagibacterales</taxon>
        <taxon>Candidatus Pelagibacteraceae</taxon>
        <taxon>Candidatus Pelagibacter</taxon>
    </lineage>
</organism>
<gene>
    <name evidence="1" type="primary">murG</name>
    <name type="ordered locus">SAR11_0024</name>
</gene>
<protein>
    <recommendedName>
        <fullName evidence="1">UDP-N-acetylglucosamine--N-acetylmuramyl-(pentapeptide) pyrophosphoryl-undecaprenol N-acetylglucosamine transferase</fullName>
        <ecNumber evidence="1">2.4.1.227</ecNumber>
    </recommendedName>
    <alternativeName>
        <fullName evidence="1">Undecaprenyl-PP-MurNAc-pentapeptide-UDPGlcNAc GlcNAc transferase</fullName>
    </alternativeName>
</protein>
<accession>Q4FPK5</accession>
<feature type="chain" id="PRO_0000315134" description="UDP-N-acetylglucosamine--N-acetylmuramyl-(pentapeptide) pyrophosphoryl-undecaprenol N-acetylglucosamine transferase">
    <location>
        <begin position="1"/>
        <end position="356"/>
    </location>
</feature>
<feature type="binding site" evidence="1">
    <location>
        <begin position="12"/>
        <end position="14"/>
    </location>
    <ligand>
        <name>UDP-N-acetyl-alpha-D-glucosamine</name>
        <dbReference type="ChEBI" id="CHEBI:57705"/>
    </ligand>
</feature>
<feature type="binding site" evidence="1">
    <location>
        <position position="120"/>
    </location>
    <ligand>
        <name>UDP-N-acetyl-alpha-D-glucosamine</name>
        <dbReference type="ChEBI" id="CHEBI:57705"/>
    </ligand>
</feature>
<feature type="binding site" evidence="1">
    <location>
        <position position="163"/>
    </location>
    <ligand>
        <name>UDP-N-acetyl-alpha-D-glucosamine</name>
        <dbReference type="ChEBI" id="CHEBI:57705"/>
    </ligand>
</feature>
<feature type="binding site" evidence="1">
    <location>
        <position position="187"/>
    </location>
    <ligand>
        <name>UDP-N-acetyl-alpha-D-glucosamine</name>
        <dbReference type="ChEBI" id="CHEBI:57705"/>
    </ligand>
</feature>
<feature type="binding site" evidence="1">
    <location>
        <position position="286"/>
    </location>
    <ligand>
        <name>UDP-N-acetyl-alpha-D-glucosamine</name>
        <dbReference type="ChEBI" id="CHEBI:57705"/>
    </ligand>
</feature>
<name>MURG_PELUB</name>
<keyword id="KW-0131">Cell cycle</keyword>
<keyword id="KW-0132">Cell division</keyword>
<keyword id="KW-0997">Cell inner membrane</keyword>
<keyword id="KW-1003">Cell membrane</keyword>
<keyword id="KW-0133">Cell shape</keyword>
<keyword id="KW-0961">Cell wall biogenesis/degradation</keyword>
<keyword id="KW-0328">Glycosyltransferase</keyword>
<keyword id="KW-0472">Membrane</keyword>
<keyword id="KW-0573">Peptidoglycan synthesis</keyword>
<keyword id="KW-1185">Reference proteome</keyword>
<keyword id="KW-0808">Transferase</keyword>